<reference key="1">
    <citation type="journal article" date="1998" name="Mol. Gen. Genet.">
        <title>Rice has two distinct classes of protein kinase genes related to SNF1 of Saccharomyces cerevisiae, which are differently regulated in early seed development.</title>
        <authorList>
            <person name="Takano M."/>
            <person name="Kajiya-Kanegae H."/>
            <person name="Funatsuki H."/>
            <person name="Kikuchi S."/>
        </authorList>
    </citation>
    <scope>NUCLEOTIDE SEQUENCE [MRNA] (ISOFORM 1)</scope>
    <scope>CATALYTIC ACTIVITY</scope>
    <scope>TISSUE SPECIFICITY</scope>
    <scope>DEVELOPMENTAL STAGE</scope>
    <scope>GENE FAMILY</scope>
    <scope>NOMENCLATURE</scope>
    <source>
        <strain>cv. Nohrin 8</strain>
    </source>
</reference>
<reference key="2">
    <citation type="journal article" date="2005" name="Plant Physiol. Biochem.">
        <title>Expressions of rice sucrose non-fermenting-1 related protein kinase 1 genes are differently regulated during the caryopsis development.</title>
        <authorList>
            <person name="Kanegae H."/>
            <person name="Miyoshi K."/>
            <person name="Hirose T."/>
            <person name="Tsuchimoto S."/>
            <person name="Mori M."/>
            <person name="Nagato Y."/>
            <person name="Takano M."/>
        </authorList>
    </citation>
    <scope>NUCLEOTIDE SEQUENCE [GENOMIC DNA]</scope>
    <scope>DEVELOPMENTAL STAGE</scope>
    <scope>TISSUE SPECIFICITY</scope>
    <scope>GENE FAMILY</scope>
    <source>
        <strain>cv. Nohrin 8</strain>
    </source>
</reference>
<reference key="3">
    <citation type="submission" date="2007-11" db="EMBL/GenBank/DDBJ databases">
        <title>Molecular cloning of the serin/threonine protein kinase gene in rice.</title>
        <authorList>
            <person name="Yoon U.H."/>
            <person name="Kim Y.H."/>
        </authorList>
    </citation>
    <scope>NUCLEOTIDE SEQUENCE [MRNA] (ISOFORM 1)</scope>
    <source>
        <strain>cv. Ilpoombyeo</strain>
        <tissue>Immature seed</tissue>
    </source>
</reference>
<reference key="4">
    <citation type="journal article" date="2005" name="Genome Res.">
        <title>Sequence, annotation, and analysis of synteny between rice chromosome 3 and diverged grass species.</title>
        <authorList>
            <consortium name="The rice chromosome 3 sequencing consortium"/>
            <person name="Buell C.R."/>
            <person name="Yuan Q."/>
            <person name="Ouyang S."/>
            <person name="Liu J."/>
            <person name="Zhu W."/>
            <person name="Wang A."/>
            <person name="Maiti R."/>
            <person name="Haas B."/>
            <person name="Wortman J."/>
            <person name="Pertea M."/>
            <person name="Jones K.M."/>
            <person name="Kim M."/>
            <person name="Overton L."/>
            <person name="Tsitrin T."/>
            <person name="Fadrosh D."/>
            <person name="Bera J."/>
            <person name="Weaver B."/>
            <person name="Jin S."/>
            <person name="Johri S."/>
            <person name="Reardon M."/>
            <person name="Webb K."/>
            <person name="Hill J."/>
            <person name="Moffat K."/>
            <person name="Tallon L."/>
            <person name="Van Aken S."/>
            <person name="Lewis M."/>
            <person name="Utterback T."/>
            <person name="Feldblyum T."/>
            <person name="Zismann V."/>
            <person name="Iobst S."/>
            <person name="Hsiao J."/>
            <person name="de Vazeille A.R."/>
            <person name="Salzberg S.L."/>
            <person name="White O."/>
            <person name="Fraser C.M."/>
            <person name="Yu Y."/>
            <person name="Kim H."/>
            <person name="Rambo T."/>
            <person name="Currie J."/>
            <person name="Collura K."/>
            <person name="Kernodle-Thompson S."/>
            <person name="Wei F."/>
            <person name="Kudrna K."/>
            <person name="Ammiraju J.S.S."/>
            <person name="Luo M."/>
            <person name="Goicoechea J.L."/>
            <person name="Wing R.A."/>
            <person name="Henry D."/>
            <person name="Oates R."/>
            <person name="Palmer M."/>
            <person name="Pries G."/>
            <person name="Saski C."/>
            <person name="Simmons J."/>
            <person name="Soderlund C."/>
            <person name="Nelson W."/>
            <person name="de la Bastide M."/>
            <person name="Spiegel L."/>
            <person name="Nascimento L."/>
            <person name="Huang E."/>
            <person name="Preston R."/>
            <person name="Zutavern T."/>
            <person name="Palmer L."/>
            <person name="O'Shaughnessy A."/>
            <person name="Dike S."/>
            <person name="McCombie W.R."/>
            <person name="Minx P."/>
            <person name="Cordum H."/>
            <person name="Wilson R."/>
            <person name="Jin W."/>
            <person name="Lee H.R."/>
            <person name="Jiang J."/>
            <person name="Jackson S."/>
        </authorList>
    </citation>
    <scope>NUCLEOTIDE SEQUENCE [LARGE SCALE GENOMIC DNA]</scope>
    <source>
        <strain>cv. Nipponbare</strain>
    </source>
</reference>
<reference key="5">
    <citation type="journal article" date="2005" name="Nature">
        <title>The map-based sequence of the rice genome.</title>
        <authorList>
            <consortium name="International rice genome sequencing project (IRGSP)"/>
        </authorList>
    </citation>
    <scope>NUCLEOTIDE SEQUENCE [LARGE SCALE GENOMIC DNA]</scope>
    <source>
        <strain>cv. Nipponbare</strain>
    </source>
</reference>
<reference key="6">
    <citation type="journal article" date="2008" name="Nucleic Acids Res.">
        <title>The rice annotation project database (RAP-DB): 2008 update.</title>
        <authorList>
            <consortium name="The rice annotation project (RAP)"/>
        </authorList>
    </citation>
    <scope>GENOME REANNOTATION</scope>
    <source>
        <strain>cv. Nipponbare</strain>
    </source>
</reference>
<reference key="7">
    <citation type="journal article" date="2013" name="Rice">
        <title>Improvement of the Oryza sativa Nipponbare reference genome using next generation sequence and optical map data.</title>
        <authorList>
            <person name="Kawahara Y."/>
            <person name="de la Bastide M."/>
            <person name="Hamilton J.P."/>
            <person name="Kanamori H."/>
            <person name="McCombie W.R."/>
            <person name="Ouyang S."/>
            <person name="Schwartz D.C."/>
            <person name="Tanaka T."/>
            <person name="Wu J."/>
            <person name="Zhou S."/>
            <person name="Childs K.L."/>
            <person name="Davidson R.M."/>
            <person name="Lin H."/>
            <person name="Quesada-Ocampo L."/>
            <person name="Vaillancourt B."/>
            <person name="Sakai H."/>
            <person name="Lee S.S."/>
            <person name="Kim J."/>
            <person name="Numa H."/>
            <person name="Itoh T."/>
            <person name="Buell C.R."/>
            <person name="Matsumoto T."/>
        </authorList>
    </citation>
    <scope>GENOME REANNOTATION</scope>
    <source>
        <strain>cv. Nipponbare</strain>
    </source>
</reference>
<reference key="8">
    <citation type="journal article" date="2005" name="PLoS Biol.">
        <title>The genomes of Oryza sativa: a history of duplications.</title>
        <authorList>
            <person name="Yu J."/>
            <person name="Wang J."/>
            <person name="Lin W."/>
            <person name="Li S."/>
            <person name="Li H."/>
            <person name="Zhou J."/>
            <person name="Ni P."/>
            <person name="Dong W."/>
            <person name="Hu S."/>
            <person name="Zeng C."/>
            <person name="Zhang J."/>
            <person name="Zhang Y."/>
            <person name="Li R."/>
            <person name="Xu Z."/>
            <person name="Li S."/>
            <person name="Li X."/>
            <person name="Zheng H."/>
            <person name="Cong L."/>
            <person name="Lin L."/>
            <person name="Yin J."/>
            <person name="Geng J."/>
            <person name="Li G."/>
            <person name="Shi J."/>
            <person name="Liu J."/>
            <person name="Lv H."/>
            <person name="Li J."/>
            <person name="Wang J."/>
            <person name="Deng Y."/>
            <person name="Ran L."/>
            <person name="Shi X."/>
            <person name="Wang X."/>
            <person name="Wu Q."/>
            <person name="Li C."/>
            <person name="Ren X."/>
            <person name="Wang J."/>
            <person name="Wang X."/>
            <person name="Li D."/>
            <person name="Liu D."/>
            <person name="Zhang X."/>
            <person name="Ji Z."/>
            <person name="Zhao W."/>
            <person name="Sun Y."/>
            <person name="Zhang Z."/>
            <person name="Bao J."/>
            <person name="Han Y."/>
            <person name="Dong L."/>
            <person name="Ji J."/>
            <person name="Chen P."/>
            <person name="Wu S."/>
            <person name="Liu J."/>
            <person name="Xiao Y."/>
            <person name="Bu D."/>
            <person name="Tan J."/>
            <person name="Yang L."/>
            <person name="Ye C."/>
            <person name="Zhang J."/>
            <person name="Xu J."/>
            <person name="Zhou Y."/>
            <person name="Yu Y."/>
            <person name="Zhang B."/>
            <person name="Zhuang S."/>
            <person name="Wei H."/>
            <person name="Liu B."/>
            <person name="Lei M."/>
            <person name="Yu H."/>
            <person name="Li Y."/>
            <person name="Xu H."/>
            <person name="Wei S."/>
            <person name="He X."/>
            <person name="Fang L."/>
            <person name="Zhang Z."/>
            <person name="Zhang Y."/>
            <person name="Huang X."/>
            <person name="Su Z."/>
            <person name="Tong W."/>
            <person name="Li J."/>
            <person name="Tong Z."/>
            <person name="Li S."/>
            <person name="Ye J."/>
            <person name="Wang L."/>
            <person name="Fang L."/>
            <person name="Lei T."/>
            <person name="Chen C.-S."/>
            <person name="Chen H.-C."/>
            <person name="Xu Z."/>
            <person name="Li H."/>
            <person name="Huang H."/>
            <person name="Zhang F."/>
            <person name="Xu H."/>
            <person name="Li N."/>
            <person name="Zhao C."/>
            <person name="Li S."/>
            <person name="Dong L."/>
            <person name="Huang Y."/>
            <person name="Li L."/>
            <person name="Xi Y."/>
            <person name="Qi Q."/>
            <person name="Li W."/>
            <person name="Zhang B."/>
            <person name="Hu W."/>
            <person name="Zhang Y."/>
            <person name="Tian X."/>
            <person name="Jiao Y."/>
            <person name="Liang X."/>
            <person name="Jin J."/>
            <person name="Gao L."/>
            <person name="Zheng W."/>
            <person name="Hao B."/>
            <person name="Liu S.-M."/>
            <person name="Wang W."/>
            <person name="Yuan L."/>
            <person name="Cao M."/>
            <person name="McDermott J."/>
            <person name="Samudrala R."/>
            <person name="Wang J."/>
            <person name="Wong G.K.-S."/>
            <person name="Yang H."/>
        </authorList>
    </citation>
    <scope>NUCLEOTIDE SEQUENCE [LARGE SCALE GENOMIC DNA]</scope>
    <source>
        <strain>cv. Nipponbare</strain>
    </source>
</reference>
<reference key="9">
    <citation type="journal article" date="2003" name="Science">
        <title>Collection, mapping, and annotation of over 28,000 cDNA clones from japonica rice.</title>
        <authorList>
            <consortium name="The rice full-length cDNA consortium"/>
        </authorList>
    </citation>
    <scope>NUCLEOTIDE SEQUENCE [LARGE SCALE MRNA] (ISOFORM 2)</scope>
    <source>
        <strain>cv. Nipponbare</strain>
    </source>
</reference>
<reference key="10">
    <citation type="journal article" date="2016" name="PLoS Genet.">
        <title>The Oryza sativa regulator HDR1 associates with the kinase OsK4 to control photoperiodic flowering.</title>
        <authorList>
            <person name="Sun X."/>
            <person name="Zhang Z."/>
            <person name="Wu J."/>
            <person name="Cui X."/>
            <person name="Feng D."/>
            <person name="Wang K."/>
            <person name="Xu M."/>
            <person name="Zhou L."/>
            <person name="Han X."/>
            <person name="Gu X."/>
            <person name="Lu T."/>
        </authorList>
    </citation>
    <scope>INTERACTION WITH HDR1</scope>
</reference>
<sequence length="508" mass="58250">MDGNAKGGGHSEALKNYNLGRTLGIGSFGKVKIAEHKLTGHRVAIKILNRRQMRNMEMEEKAKREIKILRLFIHPHIIRLYEVIYTPTDIYVVMEYCKFGELFDYIVEKGRLQEDEARRIFQQIISGVEYCHRNMVVHRDLKPENLLLDSKYNVKLADFGLSNVMHDGHFLKTSCGSPNYAAPEVISGKLYAGPEVDVWSCGVILYALLCGTLPFDDENIPNLFKKIKGGIYTLPSHLSALARDLIPRMLVVDPMKRITIREIREHQWFQIRLPRYLAVPPPDTAQQAKMIDEDTLQDVVNLGYGKDHVCESLRNRLQNEATVAYYLLLDNRFRATSGYLGADYQESLERNFNRFASSESASSNTRHYLPGSSDPHASGLRPHYPVERKWALGLQSRAQPREIMIEVLKALQDLNVSWKKNGQYNMKCRWSVGTQATDMLDVNNSFVDDSIIMDNGDVNGRLPAVIKFEIQLYKTRDEKYLLDMQRVTGPQLLFLDFCADFLTKLRVL</sequence>
<accession>Q852Q0</accession>
<accession>Q10MY9</accession>
<accession>Q9ZNT4</accession>
<feature type="chain" id="PRO_0000438039" description="Serine/threonine protein kinase OSK3">
    <location>
        <begin position="1"/>
        <end position="508"/>
    </location>
</feature>
<feature type="domain" description="Protein kinase" evidence="2">
    <location>
        <begin position="17"/>
        <end position="269"/>
    </location>
</feature>
<feature type="domain" description="UBA" evidence="3">
    <location>
        <begin position="290"/>
        <end position="330"/>
    </location>
</feature>
<feature type="domain" description="KA1" evidence="4">
    <location>
        <begin position="459"/>
        <end position="507"/>
    </location>
</feature>
<feature type="active site" description="Proton acceptor" evidence="2">
    <location>
        <position position="140"/>
    </location>
</feature>
<feature type="binding site" evidence="2">
    <location>
        <begin position="23"/>
        <end position="31"/>
    </location>
    <ligand>
        <name>ATP</name>
        <dbReference type="ChEBI" id="CHEBI:30616"/>
    </ligand>
</feature>
<feature type="binding site" evidence="2">
    <location>
        <position position="46"/>
    </location>
    <ligand>
        <name>ATP</name>
        <dbReference type="ChEBI" id="CHEBI:30616"/>
    </ligand>
</feature>
<feature type="splice variant" id="VSP_058605" description="In isoform 2.">
    <original>M</original>
    <variation>MLTRTITYCMVSVTHRIHHPSIMNKLFSTAWILRHVLRWFKVKM</variation>
    <location>
        <position position="1"/>
    </location>
</feature>
<feature type="splice variant" id="VSP_058606" description="In isoform 2.">
    <location>
        <begin position="472"/>
        <end position="474"/>
    </location>
</feature>
<keyword id="KW-0025">Alternative splicing</keyword>
<keyword id="KW-0067">ATP-binding</keyword>
<keyword id="KW-0418">Kinase</keyword>
<keyword id="KW-0547">Nucleotide-binding</keyword>
<keyword id="KW-0539">Nucleus</keyword>
<keyword id="KW-1185">Reference proteome</keyword>
<keyword id="KW-0723">Serine/threonine-protein kinase</keyword>
<keyword id="KW-0808">Transferase</keyword>
<dbReference type="EC" id="2.7.11.1" evidence="7"/>
<dbReference type="EMBL" id="D82036">
    <property type="protein sequence ID" value="BAA36295.1"/>
    <property type="molecule type" value="mRNA"/>
</dbReference>
<dbReference type="EMBL" id="D82038">
    <property type="protein sequence ID" value="BAA36297.1"/>
    <property type="molecule type" value="mRNA"/>
</dbReference>
<dbReference type="EMBL" id="AB101657">
    <property type="protein sequence ID" value="BAC56590.1"/>
    <property type="molecule type" value="Genomic_DNA"/>
</dbReference>
<dbReference type="EMBL" id="EU267991">
    <property type="protein sequence ID" value="ACA50513.1"/>
    <property type="molecule type" value="mRNA"/>
</dbReference>
<dbReference type="EMBL" id="DP000009">
    <property type="protein sequence ID" value="ABF95385.1"/>
    <property type="molecule type" value="Genomic_DNA"/>
</dbReference>
<dbReference type="EMBL" id="DP000009">
    <property type="protein sequence ID" value="ABF95386.1"/>
    <property type="molecule type" value="Genomic_DNA"/>
</dbReference>
<dbReference type="EMBL" id="AP008209">
    <property type="protein sequence ID" value="BAF11704.1"/>
    <property type="molecule type" value="Genomic_DNA"/>
</dbReference>
<dbReference type="EMBL" id="AP014959">
    <property type="protein sequence ID" value="BAS83657.1"/>
    <property type="molecule type" value="Genomic_DNA"/>
</dbReference>
<dbReference type="EMBL" id="AP014959">
    <property type="protein sequence ID" value="BAS83658.1"/>
    <property type="molecule type" value="Genomic_DNA"/>
</dbReference>
<dbReference type="EMBL" id="CM000140">
    <property type="protein sequence ID" value="EAZ26543.1"/>
    <property type="molecule type" value="Genomic_DNA"/>
</dbReference>
<dbReference type="EMBL" id="AK069206">
    <property type="protein sequence ID" value="BAG91315.1"/>
    <property type="molecule type" value="mRNA"/>
</dbReference>
<dbReference type="RefSeq" id="XP_015632249.1">
    <property type="nucleotide sequence ID" value="XM_015776763.1"/>
</dbReference>
<dbReference type="SMR" id="Q852Q0"/>
<dbReference type="FunCoup" id="Q852Q0">
    <property type="interactions" value="2094"/>
</dbReference>
<dbReference type="STRING" id="39947.Q852Q0"/>
<dbReference type="PaxDb" id="39947-Q852Q0"/>
<dbReference type="EnsemblPlants" id="Os03t0289100-01">
    <molecule id="Q852Q0-1"/>
    <property type="protein sequence ID" value="Os03t0289100-01"/>
    <property type="gene ID" value="Os03g0289100"/>
</dbReference>
<dbReference type="Gramene" id="Os03t0289100-01">
    <molecule id="Q852Q0-1"/>
    <property type="protein sequence ID" value="Os03t0289100-01"/>
    <property type="gene ID" value="Os03g0289100"/>
</dbReference>
<dbReference type="KEGG" id="dosa:Os03g0289100"/>
<dbReference type="eggNOG" id="KOG0583">
    <property type="taxonomic scope" value="Eukaryota"/>
</dbReference>
<dbReference type="InParanoid" id="Q852Q0"/>
<dbReference type="OMA" id="TRTITYC"/>
<dbReference type="OrthoDB" id="193931at2759"/>
<dbReference type="Proteomes" id="UP000000763">
    <property type="component" value="Chromosome 3"/>
</dbReference>
<dbReference type="Proteomes" id="UP000007752">
    <property type="component" value="Chromosome 3"/>
</dbReference>
<dbReference type="Proteomes" id="UP000059680">
    <property type="component" value="Chromosome 3"/>
</dbReference>
<dbReference type="GO" id="GO:0005634">
    <property type="term" value="C:nucleus"/>
    <property type="evidence" value="ECO:0007669"/>
    <property type="project" value="UniProtKB-SubCell"/>
</dbReference>
<dbReference type="GO" id="GO:0005524">
    <property type="term" value="F:ATP binding"/>
    <property type="evidence" value="ECO:0007669"/>
    <property type="project" value="UniProtKB-KW"/>
</dbReference>
<dbReference type="GO" id="GO:0106310">
    <property type="term" value="F:protein serine kinase activity"/>
    <property type="evidence" value="ECO:0007669"/>
    <property type="project" value="RHEA"/>
</dbReference>
<dbReference type="GO" id="GO:0004674">
    <property type="term" value="F:protein serine/threonine kinase activity"/>
    <property type="evidence" value="ECO:0000318"/>
    <property type="project" value="GO_Central"/>
</dbReference>
<dbReference type="GO" id="GO:0007165">
    <property type="term" value="P:signal transduction"/>
    <property type="evidence" value="ECO:0000318"/>
    <property type="project" value="GO_Central"/>
</dbReference>
<dbReference type="CDD" id="cd12122">
    <property type="entry name" value="AMPKA_C"/>
    <property type="match status" value="1"/>
</dbReference>
<dbReference type="CDD" id="cd14079">
    <property type="entry name" value="STKc_AMPK_alpha"/>
    <property type="match status" value="1"/>
</dbReference>
<dbReference type="CDD" id="cd14335">
    <property type="entry name" value="UBA_SnRK1_plant"/>
    <property type="match status" value="1"/>
</dbReference>
<dbReference type="FunFam" id="3.30.200.20:FF:000042">
    <property type="entry name" value="Aurora kinase A"/>
    <property type="match status" value="1"/>
</dbReference>
<dbReference type="FunFam" id="1.10.510.10:FF:000204">
    <property type="entry name" value="Non-specific serine/threonine protein kinase"/>
    <property type="match status" value="1"/>
</dbReference>
<dbReference type="FunFam" id="3.30.310.80:FF:000006">
    <property type="entry name" value="Non-specific serine/threonine protein kinase"/>
    <property type="match status" value="1"/>
</dbReference>
<dbReference type="Gene3D" id="3.30.310.80">
    <property type="entry name" value="Kinase associated domain 1, KA1"/>
    <property type="match status" value="1"/>
</dbReference>
<dbReference type="Gene3D" id="1.10.510.10">
    <property type="entry name" value="Transferase(Phosphotransferase) domain 1"/>
    <property type="match status" value="1"/>
</dbReference>
<dbReference type="InterPro" id="IPR028375">
    <property type="entry name" value="KA1/Ssp2_C"/>
</dbReference>
<dbReference type="InterPro" id="IPR001772">
    <property type="entry name" value="KA1_dom"/>
</dbReference>
<dbReference type="InterPro" id="IPR011009">
    <property type="entry name" value="Kinase-like_dom_sf"/>
</dbReference>
<dbReference type="InterPro" id="IPR000719">
    <property type="entry name" value="Prot_kinase_dom"/>
</dbReference>
<dbReference type="InterPro" id="IPR017441">
    <property type="entry name" value="Protein_kinase_ATP_BS"/>
</dbReference>
<dbReference type="InterPro" id="IPR008271">
    <property type="entry name" value="Ser/Thr_kinase_AS"/>
</dbReference>
<dbReference type="InterPro" id="IPR015940">
    <property type="entry name" value="UBA"/>
</dbReference>
<dbReference type="PANTHER" id="PTHR24346">
    <property type="entry name" value="MAP/MICROTUBULE AFFINITY-REGULATING KINASE"/>
    <property type="match status" value="1"/>
</dbReference>
<dbReference type="PANTHER" id="PTHR24346:SF103">
    <property type="entry name" value="NON-SPECIFIC SERINE_THREONINE PROTEIN KINASE"/>
    <property type="match status" value="1"/>
</dbReference>
<dbReference type="Pfam" id="PF02149">
    <property type="entry name" value="KA1"/>
    <property type="match status" value="1"/>
</dbReference>
<dbReference type="Pfam" id="PF00069">
    <property type="entry name" value="Pkinase"/>
    <property type="match status" value="1"/>
</dbReference>
<dbReference type="Pfam" id="PF00627">
    <property type="entry name" value="UBA"/>
    <property type="match status" value="1"/>
</dbReference>
<dbReference type="SMART" id="SM00220">
    <property type="entry name" value="S_TKc"/>
    <property type="match status" value="1"/>
</dbReference>
<dbReference type="SUPFAM" id="SSF103243">
    <property type="entry name" value="KA1-like"/>
    <property type="match status" value="1"/>
</dbReference>
<dbReference type="SUPFAM" id="SSF56112">
    <property type="entry name" value="Protein kinase-like (PK-like)"/>
    <property type="match status" value="1"/>
</dbReference>
<dbReference type="PROSITE" id="PS50032">
    <property type="entry name" value="KA1"/>
    <property type="match status" value="1"/>
</dbReference>
<dbReference type="PROSITE" id="PS00107">
    <property type="entry name" value="PROTEIN_KINASE_ATP"/>
    <property type="match status" value="1"/>
</dbReference>
<dbReference type="PROSITE" id="PS50011">
    <property type="entry name" value="PROTEIN_KINASE_DOM"/>
    <property type="match status" value="1"/>
</dbReference>
<dbReference type="PROSITE" id="PS00108">
    <property type="entry name" value="PROTEIN_KINASE_ST"/>
    <property type="match status" value="1"/>
</dbReference>
<dbReference type="PROSITE" id="PS50030">
    <property type="entry name" value="UBA"/>
    <property type="match status" value="1"/>
</dbReference>
<organism>
    <name type="scientific">Oryza sativa subsp. japonica</name>
    <name type="common">Rice</name>
    <dbReference type="NCBI Taxonomy" id="39947"/>
    <lineage>
        <taxon>Eukaryota</taxon>
        <taxon>Viridiplantae</taxon>
        <taxon>Streptophyta</taxon>
        <taxon>Embryophyta</taxon>
        <taxon>Tracheophyta</taxon>
        <taxon>Spermatophyta</taxon>
        <taxon>Magnoliopsida</taxon>
        <taxon>Liliopsida</taxon>
        <taxon>Poales</taxon>
        <taxon>Poaceae</taxon>
        <taxon>BOP clade</taxon>
        <taxon>Oryzoideae</taxon>
        <taxon>Oryzeae</taxon>
        <taxon>Oryzinae</taxon>
        <taxon>Oryza</taxon>
        <taxon>Oryza sativa</taxon>
    </lineage>
</organism>
<evidence type="ECO:0000250" key="1">
    <source>
        <dbReference type="UniProtKB" id="Q852Q1"/>
    </source>
</evidence>
<evidence type="ECO:0000255" key="2">
    <source>
        <dbReference type="PROSITE-ProRule" id="PRU00159"/>
    </source>
</evidence>
<evidence type="ECO:0000255" key="3">
    <source>
        <dbReference type="PROSITE-ProRule" id="PRU00212"/>
    </source>
</evidence>
<evidence type="ECO:0000255" key="4">
    <source>
        <dbReference type="PROSITE-ProRule" id="PRU00565"/>
    </source>
</evidence>
<evidence type="ECO:0000269" key="5">
    <source>
    </source>
</evidence>
<evidence type="ECO:0000269" key="6">
    <source>
    </source>
</evidence>
<evidence type="ECO:0000269" key="7">
    <source>
    </source>
</evidence>
<evidence type="ECO:0000303" key="8">
    <source>
    </source>
</evidence>
<evidence type="ECO:0000303" key="9">
    <source>
    </source>
</evidence>
<evidence type="ECO:0000312" key="10">
    <source>
        <dbReference type="EMBL" id="ABF95385.1"/>
    </source>
</evidence>
<evidence type="ECO:0000312" key="11">
    <source>
        <dbReference type="EMBL" id="BAF11704.1"/>
    </source>
</evidence>
<evidence type="ECO:0000312" key="12">
    <source>
        <dbReference type="EMBL" id="BAS83658.1"/>
    </source>
</evidence>
<evidence type="ECO:0000312" key="13">
    <source>
        <dbReference type="EMBL" id="EAZ26543.1"/>
    </source>
</evidence>
<gene>
    <name evidence="9" type="primary">OSK3</name>
    <name evidence="8" type="synonym">OSK35</name>
    <name evidence="9" type="synonym">OSK5</name>
    <name evidence="10" type="ordered locus">LOC_Os03g17980</name>
    <name evidence="11" type="ordered locus">Os03g0289100</name>
    <name evidence="13" type="ORF">OsJ_10438</name>
    <name evidence="12" type="ORF">OSNPB_030289100</name>
</gene>
<comment type="catalytic activity">
    <reaction evidence="7">
        <text>L-seryl-[protein] + ATP = O-phospho-L-seryl-[protein] + ADP + H(+)</text>
        <dbReference type="Rhea" id="RHEA:17989"/>
        <dbReference type="Rhea" id="RHEA-COMP:9863"/>
        <dbReference type="Rhea" id="RHEA-COMP:11604"/>
        <dbReference type="ChEBI" id="CHEBI:15378"/>
        <dbReference type="ChEBI" id="CHEBI:29999"/>
        <dbReference type="ChEBI" id="CHEBI:30616"/>
        <dbReference type="ChEBI" id="CHEBI:83421"/>
        <dbReference type="ChEBI" id="CHEBI:456216"/>
        <dbReference type="EC" id="2.7.11.1"/>
    </reaction>
</comment>
<comment type="catalytic activity">
    <reaction evidence="7">
        <text>L-threonyl-[protein] + ATP = O-phospho-L-threonyl-[protein] + ADP + H(+)</text>
        <dbReference type="Rhea" id="RHEA:46608"/>
        <dbReference type="Rhea" id="RHEA-COMP:11060"/>
        <dbReference type="Rhea" id="RHEA-COMP:11605"/>
        <dbReference type="ChEBI" id="CHEBI:15378"/>
        <dbReference type="ChEBI" id="CHEBI:30013"/>
        <dbReference type="ChEBI" id="CHEBI:30616"/>
        <dbReference type="ChEBI" id="CHEBI:61977"/>
        <dbReference type="ChEBI" id="CHEBI:456216"/>
        <dbReference type="EC" id="2.7.11.1"/>
    </reaction>
</comment>
<comment type="subunit">
    <text evidence="6">Interacts with HDR1.</text>
</comment>
<comment type="subcellular location">
    <subcellularLocation>
        <location evidence="1">Nucleus</location>
    </subcellularLocation>
</comment>
<comment type="alternative products">
    <event type="alternative splicing"/>
    <isoform>
        <id>Q852Q0-1</id>
        <name>1</name>
        <sequence type="displayed"/>
    </isoform>
    <isoform>
        <id>Q852Q0-2</id>
        <name>2</name>
        <sequence type="described" ref="VSP_058605 VSP_058606"/>
    </isoform>
</comment>
<comment type="tissue specificity">
    <text evidence="5 7">Strongly expressed in immature seeds (PubMed:9870704). Mostly expressed in panicles, and to a lower extent, in leaf sheaths (PubMed:16087344).</text>
</comment>
<comment type="developmental stage">
    <text evidence="5 7">Accumulates transiently in the early stages of seed maturation (PubMed:9870704). Observed in maturating caryopsis 1 week after flowering (DAF) (PubMed:16087344).</text>
</comment>
<comment type="similarity">
    <text evidence="2">Belongs to the protein kinase superfamily. Ser/Thr protein kinase family.</text>
</comment>
<name>OSK3_ORYSJ</name>
<protein>
    <recommendedName>
        <fullName evidence="9">Serine/threonine protein kinase OSK3</fullName>
        <shortName evidence="9">OsK3</shortName>
        <ecNumber evidence="7">2.7.11.1</ecNumber>
    </recommendedName>
    <alternativeName>
        <fullName evidence="8">Serine/threonine protein kinase OSK35</fullName>
        <shortName evidence="8">OsK35</shortName>
    </alternativeName>
</protein>
<proteinExistence type="evidence at protein level"/>